<protein>
    <recommendedName>
        <fullName evidence="1">Argininosuccinate synthase</fullName>
        <ecNumber evidence="1">6.3.4.5</ecNumber>
    </recommendedName>
    <alternativeName>
        <fullName evidence="1">Citrulline--aspartate ligase</fullName>
    </alternativeName>
</protein>
<organism>
    <name type="scientific">Brucella suis biovar 1 (strain 1330)</name>
    <dbReference type="NCBI Taxonomy" id="204722"/>
    <lineage>
        <taxon>Bacteria</taxon>
        <taxon>Pseudomonadati</taxon>
        <taxon>Pseudomonadota</taxon>
        <taxon>Alphaproteobacteria</taxon>
        <taxon>Hyphomicrobiales</taxon>
        <taxon>Brucellaceae</taxon>
        <taxon>Brucella/Ochrobactrum group</taxon>
        <taxon>Brucella</taxon>
    </lineage>
</organism>
<name>ASSY_BRUSU</name>
<dbReference type="EC" id="6.3.4.5" evidence="1"/>
<dbReference type="EMBL" id="AE014291">
    <property type="protein sequence ID" value="AAN29031.1"/>
    <property type="molecule type" value="Genomic_DNA"/>
</dbReference>
<dbReference type="EMBL" id="CP002997">
    <property type="protein sequence ID" value="AEM17443.1"/>
    <property type="molecule type" value="Genomic_DNA"/>
</dbReference>
<dbReference type="RefSeq" id="WP_006191143.1">
    <property type="nucleotide sequence ID" value="NZ_KN046804.1"/>
</dbReference>
<dbReference type="SMR" id="Q8G376"/>
<dbReference type="GeneID" id="45051228"/>
<dbReference type="KEGG" id="bms:BR0074"/>
<dbReference type="KEGG" id="bsi:BS1330_I0074"/>
<dbReference type="PATRIC" id="fig|204722.22.peg.1759"/>
<dbReference type="HOGENOM" id="CLU_032784_4_2_5"/>
<dbReference type="PhylomeDB" id="Q8G376"/>
<dbReference type="UniPathway" id="UPA00068">
    <property type="reaction ID" value="UER00113"/>
</dbReference>
<dbReference type="Proteomes" id="UP000007104">
    <property type="component" value="Chromosome I"/>
</dbReference>
<dbReference type="GO" id="GO:0005737">
    <property type="term" value="C:cytoplasm"/>
    <property type="evidence" value="ECO:0007669"/>
    <property type="project" value="UniProtKB-SubCell"/>
</dbReference>
<dbReference type="GO" id="GO:0004055">
    <property type="term" value="F:argininosuccinate synthase activity"/>
    <property type="evidence" value="ECO:0007669"/>
    <property type="project" value="UniProtKB-UniRule"/>
</dbReference>
<dbReference type="GO" id="GO:0005524">
    <property type="term" value="F:ATP binding"/>
    <property type="evidence" value="ECO:0007669"/>
    <property type="project" value="UniProtKB-UniRule"/>
</dbReference>
<dbReference type="GO" id="GO:0000053">
    <property type="term" value="P:argininosuccinate metabolic process"/>
    <property type="evidence" value="ECO:0007669"/>
    <property type="project" value="TreeGrafter"/>
</dbReference>
<dbReference type="GO" id="GO:0006526">
    <property type="term" value="P:L-arginine biosynthetic process"/>
    <property type="evidence" value="ECO:0007669"/>
    <property type="project" value="UniProtKB-UniRule"/>
</dbReference>
<dbReference type="GO" id="GO:0000050">
    <property type="term" value="P:urea cycle"/>
    <property type="evidence" value="ECO:0007669"/>
    <property type="project" value="TreeGrafter"/>
</dbReference>
<dbReference type="CDD" id="cd01999">
    <property type="entry name" value="ASS"/>
    <property type="match status" value="1"/>
</dbReference>
<dbReference type="FunFam" id="3.40.50.620:FF:000019">
    <property type="entry name" value="Argininosuccinate synthase"/>
    <property type="match status" value="1"/>
</dbReference>
<dbReference type="FunFam" id="3.90.1260.10:FF:000007">
    <property type="entry name" value="Argininosuccinate synthase"/>
    <property type="match status" value="1"/>
</dbReference>
<dbReference type="Gene3D" id="3.90.1260.10">
    <property type="entry name" value="Argininosuccinate synthetase, chain A, domain 2"/>
    <property type="match status" value="1"/>
</dbReference>
<dbReference type="Gene3D" id="3.40.50.620">
    <property type="entry name" value="HUPs"/>
    <property type="match status" value="1"/>
</dbReference>
<dbReference type="Gene3D" id="1.20.5.470">
    <property type="entry name" value="Single helix bin"/>
    <property type="match status" value="1"/>
</dbReference>
<dbReference type="HAMAP" id="MF_00005">
    <property type="entry name" value="Arg_succ_synth_type1"/>
    <property type="match status" value="1"/>
</dbReference>
<dbReference type="InterPro" id="IPR048268">
    <property type="entry name" value="Arginosuc_syn_C"/>
</dbReference>
<dbReference type="InterPro" id="IPR048267">
    <property type="entry name" value="Arginosuc_syn_N"/>
</dbReference>
<dbReference type="InterPro" id="IPR001518">
    <property type="entry name" value="Arginosuc_synth"/>
</dbReference>
<dbReference type="InterPro" id="IPR018223">
    <property type="entry name" value="Arginosuc_synth_CS"/>
</dbReference>
<dbReference type="InterPro" id="IPR023434">
    <property type="entry name" value="Arginosuc_synth_type_1_subfam"/>
</dbReference>
<dbReference type="InterPro" id="IPR024074">
    <property type="entry name" value="AS_cat/multimer_dom_body"/>
</dbReference>
<dbReference type="InterPro" id="IPR014729">
    <property type="entry name" value="Rossmann-like_a/b/a_fold"/>
</dbReference>
<dbReference type="NCBIfam" id="TIGR00032">
    <property type="entry name" value="argG"/>
    <property type="match status" value="1"/>
</dbReference>
<dbReference type="NCBIfam" id="NF001770">
    <property type="entry name" value="PRK00509.1"/>
    <property type="match status" value="1"/>
</dbReference>
<dbReference type="PANTHER" id="PTHR11587">
    <property type="entry name" value="ARGININOSUCCINATE SYNTHASE"/>
    <property type="match status" value="1"/>
</dbReference>
<dbReference type="PANTHER" id="PTHR11587:SF2">
    <property type="entry name" value="ARGININOSUCCINATE SYNTHASE"/>
    <property type="match status" value="1"/>
</dbReference>
<dbReference type="Pfam" id="PF20979">
    <property type="entry name" value="Arginosuc_syn_C"/>
    <property type="match status" value="1"/>
</dbReference>
<dbReference type="Pfam" id="PF00764">
    <property type="entry name" value="Arginosuc_synth"/>
    <property type="match status" value="1"/>
</dbReference>
<dbReference type="SUPFAM" id="SSF52402">
    <property type="entry name" value="Adenine nucleotide alpha hydrolases-like"/>
    <property type="match status" value="1"/>
</dbReference>
<dbReference type="SUPFAM" id="SSF69864">
    <property type="entry name" value="Argininosuccinate synthetase, C-terminal domain"/>
    <property type="match status" value="1"/>
</dbReference>
<dbReference type="PROSITE" id="PS00564">
    <property type="entry name" value="ARGININOSUCCIN_SYN_1"/>
    <property type="match status" value="1"/>
</dbReference>
<dbReference type="PROSITE" id="PS00565">
    <property type="entry name" value="ARGININOSUCCIN_SYN_2"/>
    <property type="match status" value="1"/>
</dbReference>
<reference key="1">
    <citation type="journal article" date="2002" name="Proc. Natl. Acad. Sci. U.S.A.">
        <title>The Brucella suis genome reveals fundamental similarities between animal and plant pathogens and symbionts.</title>
        <authorList>
            <person name="Paulsen I.T."/>
            <person name="Seshadri R."/>
            <person name="Nelson K.E."/>
            <person name="Eisen J.A."/>
            <person name="Heidelberg J.F."/>
            <person name="Read T.D."/>
            <person name="Dodson R.J."/>
            <person name="Umayam L.A."/>
            <person name="Brinkac L.M."/>
            <person name="Beanan M.J."/>
            <person name="Daugherty S.C."/>
            <person name="DeBoy R.T."/>
            <person name="Durkin A.S."/>
            <person name="Kolonay J.F."/>
            <person name="Madupu R."/>
            <person name="Nelson W.C."/>
            <person name="Ayodeji B."/>
            <person name="Kraul M."/>
            <person name="Shetty J."/>
            <person name="Malek J.A."/>
            <person name="Van Aken S.E."/>
            <person name="Riedmuller S."/>
            <person name="Tettelin H."/>
            <person name="Gill S.R."/>
            <person name="White O."/>
            <person name="Salzberg S.L."/>
            <person name="Hoover D.L."/>
            <person name="Lindler L.E."/>
            <person name="Halling S.M."/>
            <person name="Boyle S.M."/>
            <person name="Fraser C.M."/>
        </authorList>
    </citation>
    <scope>NUCLEOTIDE SEQUENCE [LARGE SCALE GENOMIC DNA]</scope>
    <source>
        <strain>1330</strain>
    </source>
</reference>
<reference key="2">
    <citation type="journal article" date="2011" name="J. Bacteriol.">
        <title>Revised genome sequence of Brucella suis 1330.</title>
        <authorList>
            <person name="Tae H."/>
            <person name="Shallom S."/>
            <person name="Settlage R."/>
            <person name="Preston D."/>
            <person name="Adams L.G."/>
            <person name="Garner H.R."/>
        </authorList>
    </citation>
    <scope>NUCLEOTIDE SEQUENCE [LARGE SCALE GENOMIC DNA]</scope>
    <source>
        <strain>1330</strain>
    </source>
</reference>
<comment type="catalytic activity">
    <reaction evidence="1">
        <text>L-citrulline + L-aspartate + ATP = 2-(N(omega)-L-arginino)succinate + AMP + diphosphate + H(+)</text>
        <dbReference type="Rhea" id="RHEA:10932"/>
        <dbReference type="ChEBI" id="CHEBI:15378"/>
        <dbReference type="ChEBI" id="CHEBI:29991"/>
        <dbReference type="ChEBI" id="CHEBI:30616"/>
        <dbReference type="ChEBI" id="CHEBI:33019"/>
        <dbReference type="ChEBI" id="CHEBI:57472"/>
        <dbReference type="ChEBI" id="CHEBI:57743"/>
        <dbReference type="ChEBI" id="CHEBI:456215"/>
        <dbReference type="EC" id="6.3.4.5"/>
    </reaction>
</comment>
<comment type="pathway">
    <text evidence="1">Amino-acid biosynthesis; L-arginine biosynthesis; L-arginine from L-ornithine and carbamoyl phosphate: step 2/3.</text>
</comment>
<comment type="subunit">
    <text evidence="1">Homotetramer.</text>
</comment>
<comment type="subcellular location">
    <subcellularLocation>
        <location evidence="1">Cytoplasm</location>
    </subcellularLocation>
</comment>
<comment type="similarity">
    <text evidence="1">Belongs to the argininosuccinate synthase family. Type 1 subfamily.</text>
</comment>
<evidence type="ECO:0000255" key="1">
    <source>
        <dbReference type="HAMAP-Rule" id="MF_00005"/>
    </source>
</evidence>
<feature type="chain" id="PRO_0000148575" description="Argininosuccinate synthase">
    <location>
        <begin position="1"/>
        <end position="406"/>
    </location>
</feature>
<feature type="binding site" evidence="1">
    <location>
        <begin position="13"/>
        <end position="21"/>
    </location>
    <ligand>
        <name>ATP</name>
        <dbReference type="ChEBI" id="CHEBI:30616"/>
    </ligand>
</feature>
<feature type="binding site" evidence="1">
    <location>
        <position position="40"/>
    </location>
    <ligand>
        <name>ATP</name>
        <dbReference type="ChEBI" id="CHEBI:30616"/>
    </ligand>
</feature>
<feature type="binding site" evidence="1">
    <location>
        <position position="91"/>
    </location>
    <ligand>
        <name>L-citrulline</name>
        <dbReference type="ChEBI" id="CHEBI:57743"/>
    </ligand>
</feature>
<feature type="binding site" evidence="1">
    <location>
        <position position="96"/>
    </location>
    <ligand>
        <name>L-citrulline</name>
        <dbReference type="ChEBI" id="CHEBI:57743"/>
    </ligand>
</feature>
<feature type="binding site" evidence="1">
    <location>
        <position position="121"/>
    </location>
    <ligand>
        <name>ATP</name>
        <dbReference type="ChEBI" id="CHEBI:30616"/>
    </ligand>
</feature>
<feature type="binding site" evidence="1">
    <location>
        <position position="123"/>
    </location>
    <ligand>
        <name>L-aspartate</name>
        <dbReference type="ChEBI" id="CHEBI:29991"/>
    </ligand>
</feature>
<feature type="binding site" evidence="1">
    <location>
        <position position="127"/>
    </location>
    <ligand>
        <name>L-aspartate</name>
        <dbReference type="ChEBI" id="CHEBI:29991"/>
    </ligand>
</feature>
<feature type="binding site" evidence="1">
    <location>
        <position position="127"/>
    </location>
    <ligand>
        <name>L-citrulline</name>
        <dbReference type="ChEBI" id="CHEBI:57743"/>
    </ligand>
</feature>
<feature type="binding site" evidence="1">
    <location>
        <position position="128"/>
    </location>
    <ligand>
        <name>L-aspartate</name>
        <dbReference type="ChEBI" id="CHEBI:29991"/>
    </ligand>
</feature>
<feature type="binding site" evidence="1">
    <location>
        <position position="131"/>
    </location>
    <ligand>
        <name>L-citrulline</name>
        <dbReference type="ChEBI" id="CHEBI:57743"/>
    </ligand>
</feature>
<feature type="binding site" evidence="1">
    <location>
        <position position="182"/>
    </location>
    <ligand>
        <name>L-citrulline</name>
        <dbReference type="ChEBI" id="CHEBI:57743"/>
    </ligand>
</feature>
<feature type="binding site" evidence="1">
    <location>
        <position position="191"/>
    </location>
    <ligand>
        <name>L-citrulline</name>
        <dbReference type="ChEBI" id="CHEBI:57743"/>
    </ligand>
</feature>
<feature type="binding site" evidence="1">
    <location>
        <position position="267"/>
    </location>
    <ligand>
        <name>L-citrulline</name>
        <dbReference type="ChEBI" id="CHEBI:57743"/>
    </ligand>
</feature>
<feature type="binding site" evidence="1">
    <location>
        <position position="279"/>
    </location>
    <ligand>
        <name>L-citrulline</name>
        <dbReference type="ChEBI" id="CHEBI:57743"/>
    </ligand>
</feature>
<keyword id="KW-0028">Amino-acid biosynthesis</keyword>
<keyword id="KW-0055">Arginine biosynthesis</keyword>
<keyword id="KW-0067">ATP-binding</keyword>
<keyword id="KW-0963">Cytoplasm</keyword>
<keyword id="KW-0436">Ligase</keyword>
<keyword id="KW-0547">Nucleotide-binding</keyword>
<gene>
    <name evidence="1" type="primary">argG</name>
    <name type="ordered locus">BR0074</name>
    <name type="ordered locus">BS1330_I0074</name>
</gene>
<accession>Q8G376</accession>
<accession>G0KAX2</accession>
<proteinExistence type="inferred from homology"/>
<sequence>MSKWKDVKKVVLAYSGGLDTSIILKWLQTELGAEVVTFTADLGQGEELEPARKKAEMLGIKEIFIEDVREEFVRDFVFPMFRANAVYEGVYLLGTSIARPLISKHLIDIAKKTGADAIAHGATGKGNDQVRFELSAYALNPDIKIIAPWRDWSFKSRTQLLEFAEQHQIPVAKDKKGEAPFSVDANLLHSSSEGKVLEDPSQEAPEYVHMRTISPETAPDKATIIKIGFEKGDAVSINGERLSPATLLAKLNDYGRDNGIGRLDLVENRFVGMKSRGVYETPGGTILLAAHRAIESITLDRGAAHLKDELMPRYAELIYYGFWFSPEREMLQAAIDHSQHHVEGEVTLKLYKGNVMVIGRESAKSLYSDKLVTFEDDQGAYDQKDAAGFIKLNALRLRTLAARDRK</sequence>